<evidence type="ECO:0000250" key="1"/>
<evidence type="ECO:0000255" key="2"/>
<evidence type="ECO:0000305" key="3"/>
<proteinExistence type="inferred from homology"/>
<keyword id="KW-1003">Cell membrane</keyword>
<keyword id="KW-0342">GTP-binding</keyword>
<keyword id="KW-0449">Lipoprotein</keyword>
<keyword id="KW-0472">Membrane</keyword>
<keyword id="KW-0488">Methylation</keyword>
<keyword id="KW-0547">Nucleotide-binding</keyword>
<keyword id="KW-0636">Prenylation</keyword>
<keyword id="KW-1185">Reference proteome</keyword>
<gene>
    <name type="primary">rabT1</name>
    <name type="ORF">DDB_G0268910</name>
</gene>
<feature type="chain" id="PRO_0000332769" description="Ras-related protein RabT1">
    <location>
        <begin position="1"/>
        <end position="219"/>
    </location>
</feature>
<feature type="propeptide" id="PRO_0000375086" description="Removed in mature form" evidence="2">
    <location>
        <begin position="220"/>
        <end position="222"/>
    </location>
</feature>
<feature type="short sequence motif" description="Effector region" evidence="1">
    <location>
        <begin position="59"/>
        <end position="66"/>
    </location>
</feature>
<feature type="binding site" evidence="1">
    <location>
        <begin position="37"/>
        <end position="44"/>
    </location>
    <ligand>
        <name>GTP</name>
        <dbReference type="ChEBI" id="CHEBI:37565"/>
    </ligand>
</feature>
<feature type="binding site" evidence="1">
    <location>
        <begin position="85"/>
        <end position="89"/>
    </location>
    <ligand>
        <name>GTP</name>
        <dbReference type="ChEBI" id="CHEBI:37565"/>
    </ligand>
</feature>
<feature type="binding site" evidence="1">
    <location>
        <begin position="145"/>
        <end position="148"/>
    </location>
    <ligand>
        <name>GTP</name>
        <dbReference type="ChEBI" id="CHEBI:37565"/>
    </ligand>
</feature>
<feature type="modified residue" description="Cysteine methyl ester" evidence="2">
    <location>
        <position position="219"/>
    </location>
</feature>
<feature type="lipid moiety-binding region" description="S-geranylgeranyl cysteine" evidence="1">
    <location>
        <position position="219"/>
    </location>
</feature>
<protein>
    <recommendedName>
        <fullName>Ras-related protein RabT1</fullName>
    </recommendedName>
</protein>
<organism>
    <name type="scientific">Dictyostelium discoideum</name>
    <name type="common">Social amoeba</name>
    <dbReference type="NCBI Taxonomy" id="44689"/>
    <lineage>
        <taxon>Eukaryota</taxon>
        <taxon>Amoebozoa</taxon>
        <taxon>Evosea</taxon>
        <taxon>Eumycetozoa</taxon>
        <taxon>Dictyostelia</taxon>
        <taxon>Dictyosteliales</taxon>
        <taxon>Dictyosteliaceae</taxon>
        <taxon>Dictyostelium</taxon>
    </lineage>
</organism>
<sequence>MKEETTTTTTTTTTKNTTKIIRNEDDDYELVKVIILGDNKTGKSSILRRYHYNEFELGVSSIGVDFIKKDYGMVNGKYYKIQIWDVNSCDRFRLLTHSYYKGAHGFMLLYDCTNQESFNNLQFWINEIINKSPNSNNSTIVIIGNKCDLVNGIKIDPIKSKQFCDSKSITSFQNVSAKDSININEPFEILFRQIIKKGHSQTVSPKHDTYENNNINKSCNIL</sequence>
<reference key="1">
    <citation type="journal article" date="2005" name="Nature">
        <title>The genome of the social amoeba Dictyostelium discoideum.</title>
        <authorList>
            <person name="Eichinger L."/>
            <person name="Pachebat J.A."/>
            <person name="Gloeckner G."/>
            <person name="Rajandream M.A."/>
            <person name="Sucgang R."/>
            <person name="Berriman M."/>
            <person name="Song J."/>
            <person name="Olsen R."/>
            <person name="Szafranski K."/>
            <person name="Xu Q."/>
            <person name="Tunggal B."/>
            <person name="Kummerfeld S."/>
            <person name="Madera M."/>
            <person name="Konfortov B.A."/>
            <person name="Rivero F."/>
            <person name="Bankier A.T."/>
            <person name="Lehmann R."/>
            <person name="Hamlin N."/>
            <person name="Davies R."/>
            <person name="Gaudet P."/>
            <person name="Fey P."/>
            <person name="Pilcher K."/>
            <person name="Chen G."/>
            <person name="Saunders D."/>
            <person name="Sodergren E.J."/>
            <person name="Davis P."/>
            <person name="Kerhornou A."/>
            <person name="Nie X."/>
            <person name="Hall N."/>
            <person name="Anjard C."/>
            <person name="Hemphill L."/>
            <person name="Bason N."/>
            <person name="Farbrother P."/>
            <person name="Desany B."/>
            <person name="Just E."/>
            <person name="Morio T."/>
            <person name="Rost R."/>
            <person name="Churcher C.M."/>
            <person name="Cooper J."/>
            <person name="Haydock S."/>
            <person name="van Driessche N."/>
            <person name="Cronin A."/>
            <person name="Goodhead I."/>
            <person name="Muzny D.M."/>
            <person name="Mourier T."/>
            <person name="Pain A."/>
            <person name="Lu M."/>
            <person name="Harper D."/>
            <person name="Lindsay R."/>
            <person name="Hauser H."/>
            <person name="James K.D."/>
            <person name="Quiles M."/>
            <person name="Madan Babu M."/>
            <person name="Saito T."/>
            <person name="Buchrieser C."/>
            <person name="Wardroper A."/>
            <person name="Felder M."/>
            <person name="Thangavelu M."/>
            <person name="Johnson D."/>
            <person name="Knights A."/>
            <person name="Loulseged H."/>
            <person name="Mungall K.L."/>
            <person name="Oliver K."/>
            <person name="Price C."/>
            <person name="Quail M.A."/>
            <person name="Urushihara H."/>
            <person name="Hernandez J."/>
            <person name="Rabbinowitsch E."/>
            <person name="Steffen D."/>
            <person name="Sanders M."/>
            <person name="Ma J."/>
            <person name="Kohara Y."/>
            <person name="Sharp S."/>
            <person name="Simmonds M.N."/>
            <person name="Spiegler S."/>
            <person name="Tivey A."/>
            <person name="Sugano S."/>
            <person name="White B."/>
            <person name="Walker D."/>
            <person name="Woodward J.R."/>
            <person name="Winckler T."/>
            <person name="Tanaka Y."/>
            <person name="Shaulsky G."/>
            <person name="Schleicher M."/>
            <person name="Weinstock G.M."/>
            <person name="Rosenthal A."/>
            <person name="Cox E.C."/>
            <person name="Chisholm R.L."/>
            <person name="Gibbs R.A."/>
            <person name="Loomis W.F."/>
            <person name="Platzer M."/>
            <person name="Kay R.R."/>
            <person name="Williams J.G."/>
            <person name="Dear P.H."/>
            <person name="Noegel A.A."/>
            <person name="Barrell B.G."/>
            <person name="Kuspa A."/>
        </authorList>
    </citation>
    <scope>NUCLEOTIDE SEQUENCE [LARGE SCALE GENOMIC DNA]</scope>
    <source>
        <strain>AX4</strain>
    </source>
</reference>
<name>RABT1_DICDI</name>
<accession>Q55EG6</accession>
<dbReference type="EMBL" id="AAFI02000004">
    <property type="protein sequence ID" value="EAL73044.1"/>
    <property type="molecule type" value="Genomic_DNA"/>
</dbReference>
<dbReference type="RefSeq" id="XP_647054.1">
    <property type="nucleotide sequence ID" value="XM_641962.1"/>
</dbReference>
<dbReference type="SMR" id="Q55EG6"/>
<dbReference type="STRING" id="44689.Q55EG6"/>
<dbReference type="PaxDb" id="44689-DDB0229415"/>
<dbReference type="EnsemblProtists" id="EAL73044">
    <property type="protein sequence ID" value="EAL73044"/>
    <property type="gene ID" value="DDB_G0268910"/>
</dbReference>
<dbReference type="GeneID" id="8616749"/>
<dbReference type="KEGG" id="ddi:DDB_G0268910"/>
<dbReference type="dictyBase" id="DDB_G0268910">
    <property type="gene designation" value="rabT1"/>
</dbReference>
<dbReference type="VEuPathDB" id="AmoebaDB:DDB_G0268910"/>
<dbReference type="eggNOG" id="KOG0084">
    <property type="taxonomic scope" value="Eukaryota"/>
</dbReference>
<dbReference type="HOGENOM" id="CLU_041217_10_6_1"/>
<dbReference type="InParanoid" id="Q55EG6"/>
<dbReference type="PhylomeDB" id="Q55EG6"/>
<dbReference type="Reactome" id="R-DDI-6798695">
    <property type="pathway name" value="Neutrophil degranulation"/>
</dbReference>
<dbReference type="Reactome" id="R-DDI-6811438">
    <property type="pathway name" value="Intra-Golgi traffic"/>
</dbReference>
<dbReference type="Reactome" id="R-DDI-8873719">
    <property type="pathway name" value="RAB geranylgeranylation"/>
</dbReference>
<dbReference type="PRO" id="PR:Q55EG6"/>
<dbReference type="Proteomes" id="UP000002195">
    <property type="component" value="Chromosome 1"/>
</dbReference>
<dbReference type="GO" id="GO:0005886">
    <property type="term" value="C:plasma membrane"/>
    <property type="evidence" value="ECO:0007669"/>
    <property type="project" value="UniProtKB-SubCell"/>
</dbReference>
<dbReference type="GO" id="GO:0005525">
    <property type="term" value="F:GTP binding"/>
    <property type="evidence" value="ECO:0000318"/>
    <property type="project" value="GO_Central"/>
</dbReference>
<dbReference type="GO" id="GO:0003924">
    <property type="term" value="F:GTPase activity"/>
    <property type="evidence" value="ECO:0000318"/>
    <property type="project" value="GO_Central"/>
</dbReference>
<dbReference type="GO" id="GO:0016192">
    <property type="term" value="P:vesicle-mediated transport"/>
    <property type="evidence" value="ECO:0000318"/>
    <property type="project" value="GO_Central"/>
</dbReference>
<dbReference type="CDD" id="cd00154">
    <property type="entry name" value="Rab"/>
    <property type="match status" value="1"/>
</dbReference>
<dbReference type="FunFam" id="3.40.50.300:FF:004919">
    <property type="entry name" value="Ras-related protein RabT2"/>
    <property type="match status" value="1"/>
</dbReference>
<dbReference type="Gene3D" id="3.40.50.300">
    <property type="entry name" value="P-loop containing nucleotide triphosphate hydrolases"/>
    <property type="match status" value="1"/>
</dbReference>
<dbReference type="InterPro" id="IPR027417">
    <property type="entry name" value="P-loop_NTPase"/>
</dbReference>
<dbReference type="InterPro" id="IPR050227">
    <property type="entry name" value="Rab"/>
</dbReference>
<dbReference type="InterPro" id="IPR005225">
    <property type="entry name" value="Small_GTP-bd"/>
</dbReference>
<dbReference type="InterPro" id="IPR001806">
    <property type="entry name" value="Small_GTPase"/>
</dbReference>
<dbReference type="NCBIfam" id="TIGR00231">
    <property type="entry name" value="small_GTP"/>
    <property type="match status" value="1"/>
</dbReference>
<dbReference type="PANTHER" id="PTHR47977">
    <property type="entry name" value="RAS-RELATED PROTEIN RAB"/>
    <property type="match status" value="1"/>
</dbReference>
<dbReference type="Pfam" id="PF00071">
    <property type="entry name" value="Ras"/>
    <property type="match status" value="1"/>
</dbReference>
<dbReference type="PRINTS" id="PR00449">
    <property type="entry name" value="RASTRNSFRMNG"/>
</dbReference>
<dbReference type="SMART" id="SM00177">
    <property type="entry name" value="ARF"/>
    <property type="match status" value="1"/>
</dbReference>
<dbReference type="SMART" id="SM00175">
    <property type="entry name" value="RAB"/>
    <property type="match status" value="1"/>
</dbReference>
<dbReference type="SMART" id="SM00173">
    <property type="entry name" value="RAS"/>
    <property type="match status" value="1"/>
</dbReference>
<dbReference type="SMART" id="SM00174">
    <property type="entry name" value="RHO"/>
    <property type="match status" value="1"/>
</dbReference>
<dbReference type="SUPFAM" id="SSF52540">
    <property type="entry name" value="P-loop containing nucleoside triphosphate hydrolases"/>
    <property type="match status" value="1"/>
</dbReference>
<dbReference type="PROSITE" id="PS51419">
    <property type="entry name" value="RAB"/>
    <property type="match status" value="1"/>
</dbReference>
<comment type="subcellular location">
    <subcellularLocation>
        <location evidence="3">Cell membrane</location>
        <topology evidence="3">Lipid-anchor</topology>
        <orientation evidence="3">Cytoplasmic side</orientation>
    </subcellularLocation>
</comment>
<comment type="similarity">
    <text evidence="3">Belongs to the small GTPase superfamily. Rab family.</text>
</comment>